<keyword id="KW-0106">Calcium</keyword>
<keyword id="KW-0249">Electron transport</keyword>
<keyword id="KW-0349">Heme</keyword>
<keyword id="KW-0408">Iron</keyword>
<keyword id="KW-0479">Metal-binding</keyword>
<keyword id="KW-0560">Oxidoreductase</keyword>
<keyword id="KW-0574">Periplasm</keyword>
<keyword id="KW-0732">Signal</keyword>
<keyword id="KW-0813">Transport</keyword>
<comment type="function">
    <text evidence="1">Catalyzes the reduction of nitrite to ammonia, consuming six electrons in the process.</text>
</comment>
<comment type="catalytic activity">
    <reaction evidence="1">
        <text>6 Fe(III)-[cytochrome c] + NH4(+) + 2 H2O = 6 Fe(II)-[cytochrome c] + nitrite + 8 H(+)</text>
        <dbReference type="Rhea" id="RHEA:13089"/>
        <dbReference type="Rhea" id="RHEA-COMP:10350"/>
        <dbReference type="Rhea" id="RHEA-COMP:14399"/>
        <dbReference type="ChEBI" id="CHEBI:15377"/>
        <dbReference type="ChEBI" id="CHEBI:15378"/>
        <dbReference type="ChEBI" id="CHEBI:16301"/>
        <dbReference type="ChEBI" id="CHEBI:28938"/>
        <dbReference type="ChEBI" id="CHEBI:29033"/>
        <dbReference type="ChEBI" id="CHEBI:29034"/>
        <dbReference type="EC" id="1.7.2.2"/>
    </reaction>
</comment>
<comment type="cofactor">
    <cofactor evidence="1">
        <name>Ca(2+)</name>
        <dbReference type="ChEBI" id="CHEBI:29108"/>
    </cofactor>
    <text evidence="1">Binds 1 Ca(2+) ion per monomer.</text>
</comment>
<comment type="cofactor">
    <cofactor evidence="1">
        <name>heme c</name>
        <dbReference type="ChEBI" id="CHEBI:61717"/>
    </cofactor>
    <text evidence="1">Binds 5 heme c groups covalently per monomer.</text>
</comment>
<comment type="pathway">
    <text evidence="1">Nitrogen metabolism; nitrate reduction (assimilation).</text>
</comment>
<comment type="subcellular location">
    <subcellularLocation>
        <location evidence="1">Periplasm</location>
    </subcellularLocation>
</comment>
<comment type="similarity">
    <text evidence="1">Belongs to the cytochrome c-552 family.</text>
</comment>
<feature type="signal peptide" evidence="1">
    <location>
        <begin position="1"/>
        <end position="33"/>
    </location>
</feature>
<feature type="chain" id="PRO_1000138223" description="Cytochrome c-552">
    <location>
        <begin position="34"/>
        <end position="473"/>
    </location>
</feature>
<feature type="binding site" description="axial binding residue" evidence="1">
    <location>
        <position position="93"/>
    </location>
    <ligand>
        <name>heme c</name>
        <dbReference type="ChEBI" id="CHEBI:61717"/>
        <label>3</label>
    </ligand>
    <ligandPart>
        <name>Fe</name>
        <dbReference type="ChEBI" id="CHEBI:18248"/>
    </ligandPart>
</feature>
<feature type="binding site" description="covalent" evidence="1">
    <location>
        <position position="121"/>
    </location>
    <ligand>
        <name>heme</name>
        <dbReference type="ChEBI" id="CHEBI:30413"/>
        <label>1</label>
    </ligand>
</feature>
<feature type="binding site" description="covalent" evidence="1">
    <location>
        <position position="124"/>
    </location>
    <ligand>
        <name>heme</name>
        <dbReference type="ChEBI" id="CHEBI:30413"/>
        <label>1</label>
    </ligand>
</feature>
<feature type="binding site" description="axial binding residue" evidence="1">
    <location>
        <position position="125"/>
    </location>
    <ligand>
        <name>heme</name>
        <dbReference type="ChEBI" id="CHEBI:30413"/>
        <label>1</label>
    </ligand>
    <ligandPart>
        <name>Fe</name>
        <dbReference type="ChEBI" id="CHEBI:18248"/>
    </ligandPart>
</feature>
<feature type="binding site" description="covalent" evidence="1">
    <location>
        <position position="159"/>
    </location>
    <ligand>
        <name>heme c</name>
        <dbReference type="ChEBI" id="CHEBI:61717"/>
        <label>2</label>
    </ligand>
</feature>
<feature type="binding site" description="covalent" evidence="1">
    <location>
        <position position="162"/>
    </location>
    <ligand>
        <name>heme c</name>
        <dbReference type="ChEBI" id="CHEBI:61717"/>
        <label>2</label>
    </ligand>
</feature>
<feature type="binding site" description="axial binding residue" evidence="1">
    <location>
        <position position="163"/>
    </location>
    <ligand>
        <name>heme c</name>
        <dbReference type="ChEBI" id="CHEBI:61717"/>
        <label>2</label>
    </ligand>
    <ligandPart>
        <name>Fe</name>
        <dbReference type="ChEBI" id="CHEBI:18248"/>
    </ligandPart>
</feature>
<feature type="binding site" description="covalent" evidence="1">
    <location>
        <position position="201"/>
    </location>
    <ligand>
        <name>heme c</name>
        <dbReference type="ChEBI" id="CHEBI:61717"/>
        <label>3</label>
    </ligand>
</feature>
<feature type="binding site" description="covalent" evidence="1">
    <location>
        <position position="204"/>
    </location>
    <ligand>
        <name>heme c</name>
        <dbReference type="ChEBI" id="CHEBI:61717"/>
        <label>3</label>
    </ligand>
</feature>
<feature type="binding site" description="axial binding residue" evidence="1">
    <location>
        <position position="205"/>
    </location>
    <ligand>
        <name>heme c</name>
        <dbReference type="ChEBI" id="CHEBI:61717"/>
        <label>3</label>
    </ligand>
    <ligandPart>
        <name>Fe</name>
        <dbReference type="ChEBI" id="CHEBI:18248"/>
    </ligandPart>
</feature>
<feature type="binding site" evidence="1">
    <location>
        <position position="207"/>
    </location>
    <ligand>
        <name>Ca(2+)</name>
        <dbReference type="ChEBI" id="CHEBI:29108"/>
    </ligand>
</feature>
<feature type="binding site" evidence="1">
    <location>
        <position position="208"/>
    </location>
    <ligand>
        <name>Ca(2+)</name>
        <dbReference type="ChEBI" id="CHEBI:29108"/>
    </ligand>
</feature>
<feature type="binding site" evidence="1">
    <location>
        <position position="208"/>
    </location>
    <ligand>
        <name>substrate</name>
    </ligand>
</feature>
<feature type="binding site" evidence="1">
    <location>
        <position position="256"/>
    </location>
    <ligand>
        <name>Ca(2+)</name>
        <dbReference type="ChEBI" id="CHEBI:29108"/>
    </ligand>
</feature>
<feature type="binding site" evidence="1">
    <location>
        <position position="258"/>
    </location>
    <ligand>
        <name>Ca(2+)</name>
        <dbReference type="ChEBI" id="CHEBI:29108"/>
    </ligand>
</feature>
<feature type="binding site" evidence="1">
    <location>
        <position position="259"/>
    </location>
    <ligand>
        <name>substrate</name>
    </ligand>
</feature>
<feature type="binding site" description="axial binding residue" evidence="1">
    <location>
        <position position="270"/>
    </location>
    <ligand>
        <name>heme c</name>
        <dbReference type="ChEBI" id="CHEBI:61717"/>
        <label>5</label>
    </ligand>
    <ligandPart>
        <name>Fe</name>
        <dbReference type="ChEBI" id="CHEBI:18248"/>
    </ligandPart>
</feature>
<feature type="binding site" description="covalent" evidence="1">
    <location>
        <position position="277"/>
    </location>
    <ligand>
        <name>heme c</name>
        <dbReference type="ChEBI" id="CHEBI:61717"/>
        <label>4</label>
    </ligand>
</feature>
<feature type="binding site" description="covalent" evidence="1">
    <location>
        <position position="280"/>
    </location>
    <ligand>
        <name>heme c</name>
        <dbReference type="ChEBI" id="CHEBI:61717"/>
        <label>4</label>
    </ligand>
</feature>
<feature type="binding site" description="axial binding residue" evidence="1">
    <location>
        <position position="281"/>
    </location>
    <ligand>
        <name>heme c</name>
        <dbReference type="ChEBI" id="CHEBI:61717"/>
        <label>4</label>
    </ligand>
    <ligandPart>
        <name>Fe</name>
        <dbReference type="ChEBI" id="CHEBI:18248"/>
    </ligandPart>
</feature>
<feature type="binding site" description="axial binding residue" evidence="1">
    <location>
        <position position="296"/>
    </location>
    <ligand>
        <name>heme c</name>
        <dbReference type="ChEBI" id="CHEBI:61717"/>
        <label>2</label>
    </ligand>
    <ligandPart>
        <name>Fe</name>
        <dbReference type="ChEBI" id="CHEBI:18248"/>
    </ligandPart>
</feature>
<feature type="binding site" description="covalent" evidence="1">
    <location>
        <position position="309"/>
    </location>
    <ligand>
        <name>heme c</name>
        <dbReference type="ChEBI" id="CHEBI:61717"/>
        <label>5</label>
    </ligand>
</feature>
<feature type="binding site" description="covalent" evidence="1">
    <location>
        <position position="312"/>
    </location>
    <ligand>
        <name>heme c</name>
        <dbReference type="ChEBI" id="CHEBI:61717"/>
        <label>5</label>
    </ligand>
</feature>
<feature type="binding site" description="axial binding residue" evidence="1">
    <location>
        <position position="313"/>
    </location>
    <ligand>
        <name>heme c</name>
        <dbReference type="ChEBI" id="CHEBI:61717"/>
        <label>5</label>
    </ligand>
    <ligandPart>
        <name>Fe</name>
        <dbReference type="ChEBI" id="CHEBI:18248"/>
    </ligandPart>
</feature>
<feature type="binding site" description="axial binding residue" evidence="1">
    <location>
        <position position="388"/>
    </location>
    <ligand>
        <name>heme c</name>
        <dbReference type="ChEBI" id="CHEBI:61717"/>
        <label>4</label>
    </ligand>
    <ligandPart>
        <name>Fe</name>
        <dbReference type="ChEBI" id="CHEBI:18248"/>
    </ligandPart>
</feature>
<gene>
    <name evidence="1" type="primary">nrfA</name>
    <name type="ordered locus">Shewana3_0658</name>
</gene>
<proteinExistence type="inferred from homology"/>
<protein>
    <recommendedName>
        <fullName evidence="1">Cytochrome c-552</fullName>
        <ecNumber evidence="1">1.7.2.2</ecNumber>
    </recommendedName>
    <alternativeName>
        <fullName evidence="1">Ammonia-forming cytochrome c nitrite reductase</fullName>
        <shortName evidence="1">Cytochrome c nitrite reductase</shortName>
    </alternativeName>
</protein>
<accession>A0KSX7</accession>
<sequence length="473" mass="52673">MQHGDEMMKKMTGKSFALSALVAASFMAAGAMASDKTEPRNEVYKDKFANQYNSWHDTAKSEEITDALAGDPSLVILWAGYGFAKDYNAPRGHMYAVTDVRNTLRTGAPANAEDGPMPMACWSCKSPDVPRLIEEQGEEGYFKGKWAKGGPEVVNTIGCSDCHEKGTPKLRISRPFAERAMETIGTPFDKASKKDKQSMVCGQCHVEYYFEKKDDRKGFVKFPWDSGTTVEQMEAYYDAIEFSDWTHALSKTPMLKAQHPGYETWKLGVHGKNDVSCVDCHMPKVTNDKGRKYTDHKVGNPFDRFDETCATCHSQSKEFLEGITKERYAKVKELKARAEGQLVKAHFEAAKAWEVGATEAEMKPILTDIRHAQWRWDFAIASHGVAAHAPEEALRILGTAVDKAADARVKLAQLLAKKGVTDAVAIPDISTKAKAQAALGMDMDKMNAEKEAFKKDVLPKWDEEAKKREATYK</sequence>
<name>NRFA_SHESA</name>
<evidence type="ECO:0000255" key="1">
    <source>
        <dbReference type="HAMAP-Rule" id="MF_01182"/>
    </source>
</evidence>
<reference key="1">
    <citation type="submission" date="2006-09" db="EMBL/GenBank/DDBJ databases">
        <title>Complete sequence of chromosome 1 of Shewanella sp. ANA-3.</title>
        <authorList>
            <person name="Copeland A."/>
            <person name="Lucas S."/>
            <person name="Lapidus A."/>
            <person name="Barry K."/>
            <person name="Detter J.C."/>
            <person name="Glavina del Rio T."/>
            <person name="Hammon N."/>
            <person name="Israni S."/>
            <person name="Dalin E."/>
            <person name="Tice H."/>
            <person name="Pitluck S."/>
            <person name="Chertkov O."/>
            <person name="Brettin T."/>
            <person name="Bruce D."/>
            <person name="Han C."/>
            <person name="Tapia R."/>
            <person name="Gilna P."/>
            <person name="Schmutz J."/>
            <person name="Larimer F."/>
            <person name="Land M."/>
            <person name="Hauser L."/>
            <person name="Kyrpides N."/>
            <person name="Kim E."/>
            <person name="Newman D."/>
            <person name="Salticov C."/>
            <person name="Konstantinidis K."/>
            <person name="Klappenback J."/>
            <person name="Tiedje J."/>
            <person name="Richardson P."/>
        </authorList>
    </citation>
    <scope>NUCLEOTIDE SEQUENCE [LARGE SCALE GENOMIC DNA]</scope>
    <source>
        <strain>ANA-3</strain>
    </source>
</reference>
<dbReference type="EC" id="1.7.2.2" evidence="1"/>
<dbReference type="EMBL" id="CP000469">
    <property type="protein sequence ID" value="ABK46896.1"/>
    <property type="molecule type" value="Genomic_DNA"/>
</dbReference>
<dbReference type="SMR" id="A0KSX7"/>
<dbReference type="STRING" id="94122.Shewana3_0658"/>
<dbReference type="KEGG" id="shn:Shewana3_0658"/>
<dbReference type="eggNOG" id="COG3303">
    <property type="taxonomic scope" value="Bacteria"/>
</dbReference>
<dbReference type="HOGENOM" id="CLU_035040_1_0_6"/>
<dbReference type="UniPathway" id="UPA00653"/>
<dbReference type="Proteomes" id="UP000002589">
    <property type="component" value="Chromosome"/>
</dbReference>
<dbReference type="GO" id="GO:0030288">
    <property type="term" value="C:outer membrane-bounded periplasmic space"/>
    <property type="evidence" value="ECO:0007669"/>
    <property type="project" value="TreeGrafter"/>
</dbReference>
<dbReference type="GO" id="GO:0005509">
    <property type="term" value="F:calcium ion binding"/>
    <property type="evidence" value="ECO:0007669"/>
    <property type="project" value="UniProtKB-UniRule"/>
</dbReference>
<dbReference type="GO" id="GO:0020037">
    <property type="term" value="F:heme binding"/>
    <property type="evidence" value="ECO:0007669"/>
    <property type="project" value="InterPro"/>
</dbReference>
<dbReference type="GO" id="GO:0005506">
    <property type="term" value="F:iron ion binding"/>
    <property type="evidence" value="ECO:0007669"/>
    <property type="project" value="UniProtKB-UniRule"/>
</dbReference>
<dbReference type="GO" id="GO:0042279">
    <property type="term" value="F:nitrite reductase (cytochrome, ammonia-forming) activity"/>
    <property type="evidence" value="ECO:0007669"/>
    <property type="project" value="UniProtKB-UniRule"/>
</dbReference>
<dbReference type="GO" id="GO:0019645">
    <property type="term" value="P:anaerobic electron transport chain"/>
    <property type="evidence" value="ECO:0007669"/>
    <property type="project" value="TreeGrafter"/>
</dbReference>
<dbReference type="GO" id="GO:0042128">
    <property type="term" value="P:nitrate assimilation"/>
    <property type="evidence" value="ECO:0007669"/>
    <property type="project" value="UniProtKB-UniRule"/>
</dbReference>
<dbReference type="CDD" id="cd00548">
    <property type="entry name" value="NrfA-like"/>
    <property type="match status" value="1"/>
</dbReference>
<dbReference type="FunFam" id="1.10.1130.10:FF:000002">
    <property type="entry name" value="Cytochrome c-552"/>
    <property type="match status" value="1"/>
</dbReference>
<dbReference type="FunFam" id="1.20.140.10:FF:000014">
    <property type="entry name" value="Cytochrome c-552"/>
    <property type="match status" value="1"/>
</dbReference>
<dbReference type="Gene3D" id="1.20.140.10">
    <property type="entry name" value="Butyryl-CoA Dehydrogenase, subunit A, domain 3"/>
    <property type="match status" value="1"/>
</dbReference>
<dbReference type="Gene3D" id="1.10.1130.10">
    <property type="entry name" value="Flavocytochrome C3, Chain A"/>
    <property type="match status" value="1"/>
</dbReference>
<dbReference type="HAMAP" id="MF_01182">
    <property type="entry name" value="Cytochrom_C552"/>
    <property type="match status" value="1"/>
</dbReference>
<dbReference type="InterPro" id="IPR003321">
    <property type="entry name" value="Cyt_c552"/>
</dbReference>
<dbReference type="InterPro" id="IPR017570">
    <property type="entry name" value="Cyt_c_NO2Rdtase_formate-dep"/>
</dbReference>
<dbReference type="InterPro" id="IPR036280">
    <property type="entry name" value="Multihaem_cyt_sf"/>
</dbReference>
<dbReference type="NCBIfam" id="TIGR03152">
    <property type="entry name" value="cyto_c552_HCOOH"/>
    <property type="match status" value="1"/>
</dbReference>
<dbReference type="NCBIfam" id="NF008339">
    <property type="entry name" value="PRK11125.1"/>
    <property type="match status" value="1"/>
</dbReference>
<dbReference type="PANTHER" id="PTHR30633:SF0">
    <property type="entry name" value="CYTOCHROME C-552"/>
    <property type="match status" value="1"/>
</dbReference>
<dbReference type="PANTHER" id="PTHR30633">
    <property type="entry name" value="CYTOCHROME C-552 RESPIRATORY NITRITE REDUCTASE"/>
    <property type="match status" value="1"/>
</dbReference>
<dbReference type="Pfam" id="PF02335">
    <property type="entry name" value="Cytochrom_C552"/>
    <property type="match status" value="1"/>
</dbReference>
<dbReference type="PIRSF" id="PIRSF000243">
    <property type="entry name" value="Cyt_c552"/>
    <property type="match status" value="1"/>
</dbReference>
<dbReference type="SUPFAM" id="SSF48695">
    <property type="entry name" value="Multiheme cytochromes"/>
    <property type="match status" value="1"/>
</dbReference>
<dbReference type="PROSITE" id="PS51008">
    <property type="entry name" value="MULTIHEME_CYTC"/>
    <property type="match status" value="1"/>
</dbReference>
<organism>
    <name type="scientific">Shewanella sp. (strain ANA-3)</name>
    <dbReference type="NCBI Taxonomy" id="94122"/>
    <lineage>
        <taxon>Bacteria</taxon>
        <taxon>Pseudomonadati</taxon>
        <taxon>Pseudomonadota</taxon>
        <taxon>Gammaproteobacteria</taxon>
        <taxon>Alteromonadales</taxon>
        <taxon>Shewanellaceae</taxon>
        <taxon>Shewanella</taxon>
    </lineage>
</organism>